<reference key="1">
    <citation type="journal article" date="2009" name="Appl. Environ. Microbiol.">
        <title>Genomic analysis of 'Elusimicrobium minutum,' the first cultivated representative of the phylum 'Elusimicrobia' (formerly termite group 1).</title>
        <authorList>
            <person name="Herlemann D.P.R."/>
            <person name="Geissinger O."/>
            <person name="Ikeda-Ohtsubo W."/>
            <person name="Kunin V."/>
            <person name="Sun H."/>
            <person name="Lapidus A."/>
            <person name="Hugenholtz P."/>
            <person name="Brune A."/>
        </authorList>
    </citation>
    <scope>NUCLEOTIDE SEQUENCE [LARGE SCALE GENOMIC DNA]</scope>
    <source>
        <strain>Pei191</strain>
    </source>
</reference>
<accession>B2KBA5</accession>
<organism>
    <name type="scientific">Elusimicrobium minutum (strain Pei191)</name>
    <dbReference type="NCBI Taxonomy" id="445932"/>
    <lineage>
        <taxon>Bacteria</taxon>
        <taxon>Pseudomonadati</taxon>
        <taxon>Elusimicrobiota</taxon>
        <taxon>Elusimicrobia</taxon>
        <taxon>Elusimicrobiales</taxon>
        <taxon>Elusimicrobiaceae</taxon>
        <taxon>Elusimicrobium</taxon>
    </lineage>
</organism>
<sequence length="423" mass="46129">MSKIKQVIAREVLDSRGFPTVEADVILTSGVMGRAAVPSGASTGSHEAVELRDGGARYMGKGVLKAVANVNKIAKKITGMEASDIRLIDDTMIALDGTPNKGKFGANAILAVSMAVLRAGAADKKMPLYDYIRKIYAIKEKNYLLPVPMLNIINGGKHADSGLDVQEFMIVPNVSKSFKEGLREATEVYHTLKGILKAKGMVTAVGDEGGFAPHITKHEDVLKTIMDACKKAGHSQIKLALDCAASEFYKNGKYTFEKKQVSSKDMTKVYSSWVKKYPIVSIEDPLHEDDWDGWLHITKELGKKIRLVGDDLFVTNPERLEEGIEKKTANAILIKLNQIGSVSETIDVINMAHKAGYACVISHRSGETEDAFIADLAVATNAGAIKTGAPCRSERNAKYNRLLQIEQELGKKASYAKTKVFKK</sequence>
<evidence type="ECO:0000255" key="1">
    <source>
        <dbReference type="HAMAP-Rule" id="MF_00318"/>
    </source>
</evidence>
<keyword id="KW-0963">Cytoplasm</keyword>
<keyword id="KW-0324">Glycolysis</keyword>
<keyword id="KW-0456">Lyase</keyword>
<keyword id="KW-0460">Magnesium</keyword>
<keyword id="KW-0479">Metal-binding</keyword>
<keyword id="KW-1185">Reference proteome</keyword>
<keyword id="KW-0964">Secreted</keyword>
<name>ENO_ELUMP</name>
<feature type="chain" id="PRO_1000115862" description="Enolase">
    <location>
        <begin position="1"/>
        <end position="423"/>
    </location>
</feature>
<feature type="active site" description="Proton donor" evidence="1">
    <location>
        <position position="208"/>
    </location>
</feature>
<feature type="active site" description="Proton acceptor" evidence="1">
    <location>
        <position position="335"/>
    </location>
</feature>
<feature type="binding site" evidence="1">
    <location>
        <position position="166"/>
    </location>
    <ligand>
        <name>(2R)-2-phosphoglycerate</name>
        <dbReference type="ChEBI" id="CHEBI:58289"/>
    </ligand>
</feature>
<feature type="binding site" evidence="1">
    <location>
        <position position="242"/>
    </location>
    <ligand>
        <name>Mg(2+)</name>
        <dbReference type="ChEBI" id="CHEBI:18420"/>
    </ligand>
</feature>
<feature type="binding site" evidence="1">
    <location>
        <position position="283"/>
    </location>
    <ligand>
        <name>Mg(2+)</name>
        <dbReference type="ChEBI" id="CHEBI:18420"/>
    </ligand>
</feature>
<feature type="binding site" evidence="1">
    <location>
        <position position="310"/>
    </location>
    <ligand>
        <name>Mg(2+)</name>
        <dbReference type="ChEBI" id="CHEBI:18420"/>
    </ligand>
</feature>
<feature type="binding site" evidence="1">
    <location>
        <position position="335"/>
    </location>
    <ligand>
        <name>(2R)-2-phosphoglycerate</name>
        <dbReference type="ChEBI" id="CHEBI:58289"/>
    </ligand>
</feature>
<feature type="binding site" evidence="1">
    <location>
        <position position="364"/>
    </location>
    <ligand>
        <name>(2R)-2-phosphoglycerate</name>
        <dbReference type="ChEBI" id="CHEBI:58289"/>
    </ligand>
</feature>
<feature type="binding site" evidence="1">
    <location>
        <position position="365"/>
    </location>
    <ligand>
        <name>(2R)-2-phosphoglycerate</name>
        <dbReference type="ChEBI" id="CHEBI:58289"/>
    </ligand>
</feature>
<feature type="binding site" evidence="1">
    <location>
        <position position="386"/>
    </location>
    <ligand>
        <name>(2R)-2-phosphoglycerate</name>
        <dbReference type="ChEBI" id="CHEBI:58289"/>
    </ligand>
</feature>
<gene>
    <name evidence="1" type="primary">eno</name>
    <name type="ordered locus">Emin_0370</name>
</gene>
<comment type="function">
    <text evidence="1">Catalyzes the reversible conversion of 2-phosphoglycerate (2-PG) into phosphoenolpyruvate (PEP). It is essential for the degradation of carbohydrates via glycolysis.</text>
</comment>
<comment type="catalytic activity">
    <reaction evidence="1">
        <text>(2R)-2-phosphoglycerate = phosphoenolpyruvate + H2O</text>
        <dbReference type="Rhea" id="RHEA:10164"/>
        <dbReference type="ChEBI" id="CHEBI:15377"/>
        <dbReference type="ChEBI" id="CHEBI:58289"/>
        <dbReference type="ChEBI" id="CHEBI:58702"/>
        <dbReference type="EC" id="4.2.1.11"/>
    </reaction>
</comment>
<comment type="cofactor">
    <cofactor evidence="1">
        <name>Mg(2+)</name>
        <dbReference type="ChEBI" id="CHEBI:18420"/>
    </cofactor>
    <text evidence="1">Binds a second Mg(2+) ion via substrate during catalysis.</text>
</comment>
<comment type="pathway">
    <text evidence="1">Carbohydrate degradation; glycolysis; pyruvate from D-glyceraldehyde 3-phosphate: step 4/5.</text>
</comment>
<comment type="subcellular location">
    <subcellularLocation>
        <location evidence="1">Cytoplasm</location>
    </subcellularLocation>
    <subcellularLocation>
        <location evidence="1">Secreted</location>
    </subcellularLocation>
    <subcellularLocation>
        <location evidence="1">Cell surface</location>
    </subcellularLocation>
    <text evidence="1">Fractions of enolase are present in both the cytoplasm and on the cell surface.</text>
</comment>
<comment type="similarity">
    <text evidence="1">Belongs to the enolase family.</text>
</comment>
<protein>
    <recommendedName>
        <fullName evidence="1">Enolase</fullName>
        <ecNumber evidence="1">4.2.1.11</ecNumber>
    </recommendedName>
    <alternativeName>
        <fullName evidence="1">2-phospho-D-glycerate hydro-lyase</fullName>
    </alternativeName>
    <alternativeName>
        <fullName evidence="1">2-phosphoglycerate dehydratase</fullName>
    </alternativeName>
</protein>
<proteinExistence type="inferred from homology"/>
<dbReference type="EC" id="4.2.1.11" evidence="1"/>
<dbReference type="EMBL" id="CP001055">
    <property type="protein sequence ID" value="ACC97927.1"/>
    <property type="molecule type" value="Genomic_DNA"/>
</dbReference>
<dbReference type="RefSeq" id="WP_012414542.1">
    <property type="nucleotide sequence ID" value="NC_010644.1"/>
</dbReference>
<dbReference type="SMR" id="B2KBA5"/>
<dbReference type="STRING" id="445932.Emin_0370"/>
<dbReference type="KEGG" id="emi:Emin_0370"/>
<dbReference type="HOGENOM" id="CLU_031223_2_1_0"/>
<dbReference type="OrthoDB" id="9804716at2"/>
<dbReference type="UniPathway" id="UPA00109">
    <property type="reaction ID" value="UER00187"/>
</dbReference>
<dbReference type="Proteomes" id="UP000001029">
    <property type="component" value="Chromosome"/>
</dbReference>
<dbReference type="GO" id="GO:0009986">
    <property type="term" value="C:cell surface"/>
    <property type="evidence" value="ECO:0007669"/>
    <property type="project" value="UniProtKB-SubCell"/>
</dbReference>
<dbReference type="GO" id="GO:0005576">
    <property type="term" value="C:extracellular region"/>
    <property type="evidence" value="ECO:0007669"/>
    <property type="project" value="UniProtKB-SubCell"/>
</dbReference>
<dbReference type="GO" id="GO:0000015">
    <property type="term" value="C:phosphopyruvate hydratase complex"/>
    <property type="evidence" value="ECO:0007669"/>
    <property type="project" value="InterPro"/>
</dbReference>
<dbReference type="GO" id="GO:0000287">
    <property type="term" value="F:magnesium ion binding"/>
    <property type="evidence" value="ECO:0007669"/>
    <property type="project" value="UniProtKB-UniRule"/>
</dbReference>
<dbReference type="GO" id="GO:0004634">
    <property type="term" value="F:phosphopyruvate hydratase activity"/>
    <property type="evidence" value="ECO:0007669"/>
    <property type="project" value="UniProtKB-UniRule"/>
</dbReference>
<dbReference type="GO" id="GO:0006096">
    <property type="term" value="P:glycolytic process"/>
    <property type="evidence" value="ECO:0007669"/>
    <property type="project" value="UniProtKB-UniRule"/>
</dbReference>
<dbReference type="CDD" id="cd03313">
    <property type="entry name" value="enolase"/>
    <property type="match status" value="1"/>
</dbReference>
<dbReference type="FunFam" id="3.30.390.10:FF:000001">
    <property type="entry name" value="Enolase"/>
    <property type="match status" value="1"/>
</dbReference>
<dbReference type="Gene3D" id="3.20.20.120">
    <property type="entry name" value="Enolase-like C-terminal domain"/>
    <property type="match status" value="1"/>
</dbReference>
<dbReference type="Gene3D" id="3.30.390.10">
    <property type="entry name" value="Enolase-like, N-terminal domain"/>
    <property type="match status" value="1"/>
</dbReference>
<dbReference type="HAMAP" id="MF_00318">
    <property type="entry name" value="Enolase"/>
    <property type="match status" value="1"/>
</dbReference>
<dbReference type="InterPro" id="IPR000941">
    <property type="entry name" value="Enolase"/>
</dbReference>
<dbReference type="InterPro" id="IPR036849">
    <property type="entry name" value="Enolase-like_C_sf"/>
</dbReference>
<dbReference type="InterPro" id="IPR029017">
    <property type="entry name" value="Enolase-like_N"/>
</dbReference>
<dbReference type="InterPro" id="IPR020810">
    <property type="entry name" value="Enolase_C"/>
</dbReference>
<dbReference type="InterPro" id="IPR020809">
    <property type="entry name" value="Enolase_CS"/>
</dbReference>
<dbReference type="InterPro" id="IPR020811">
    <property type="entry name" value="Enolase_N"/>
</dbReference>
<dbReference type="NCBIfam" id="TIGR01060">
    <property type="entry name" value="eno"/>
    <property type="match status" value="1"/>
</dbReference>
<dbReference type="PANTHER" id="PTHR11902">
    <property type="entry name" value="ENOLASE"/>
    <property type="match status" value="1"/>
</dbReference>
<dbReference type="PANTHER" id="PTHR11902:SF1">
    <property type="entry name" value="ENOLASE"/>
    <property type="match status" value="1"/>
</dbReference>
<dbReference type="Pfam" id="PF00113">
    <property type="entry name" value="Enolase_C"/>
    <property type="match status" value="1"/>
</dbReference>
<dbReference type="Pfam" id="PF03952">
    <property type="entry name" value="Enolase_N"/>
    <property type="match status" value="1"/>
</dbReference>
<dbReference type="PIRSF" id="PIRSF001400">
    <property type="entry name" value="Enolase"/>
    <property type="match status" value="1"/>
</dbReference>
<dbReference type="PRINTS" id="PR00148">
    <property type="entry name" value="ENOLASE"/>
</dbReference>
<dbReference type="SFLD" id="SFLDS00001">
    <property type="entry name" value="Enolase"/>
    <property type="match status" value="1"/>
</dbReference>
<dbReference type="SFLD" id="SFLDF00002">
    <property type="entry name" value="enolase"/>
    <property type="match status" value="1"/>
</dbReference>
<dbReference type="SMART" id="SM01192">
    <property type="entry name" value="Enolase_C"/>
    <property type="match status" value="1"/>
</dbReference>
<dbReference type="SMART" id="SM01193">
    <property type="entry name" value="Enolase_N"/>
    <property type="match status" value="1"/>
</dbReference>
<dbReference type="SUPFAM" id="SSF51604">
    <property type="entry name" value="Enolase C-terminal domain-like"/>
    <property type="match status" value="1"/>
</dbReference>
<dbReference type="SUPFAM" id="SSF54826">
    <property type="entry name" value="Enolase N-terminal domain-like"/>
    <property type="match status" value="1"/>
</dbReference>
<dbReference type="PROSITE" id="PS00164">
    <property type="entry name" value="ENOLASE"/>
    <property type="match status" value="1"/>
</dbReference>